<keyword id="KW-0227">DNA damage</keyword>
<keyword id="KW-0233">DNA recombination</keyword>
<keyword id="KW-0234">DNA repair</keyword>
<feature type="chain" id="PRO_0000264850" description="DNA repair protein RecO">
    <location>
        <begin position="1"/>
        <end position="251"/>
    </location>
</feature>
<dbReference type="EMBL" id="CP000262">
    <property type="protein sequence ID" value="ABF36969.1"/>
    <property type="molecule type" value="Genomic_DNA"/>
</dbReference>
<dbReference type="SMR" id="Q1J942"/>
<dbReference type="KEGG" id="spi:MGAS10750_Spy0019"/>
<dbReference type="HOGENOM" id="CLU_066632_4_0_9"/>
<dbReference type="Proteomes" id="UP000002434">
    <property type="component" value="Chromosome"/>
</dbReference>
<dbReference type="GO" id="GO:0043590">
    <property type="term" value="C:bacterial nucleoid"/>
    <property type="evidence" value="ECO:0007669"/>
    <property type="project" value="TreeGrafter"/>
</dbReference>
<dbReference type="GO" id="GO:0006310">
    <property type="term" value="P:DNA recombination"/>
    <property type="evidence" value="ECO:0007669"/>
    <property type="project" value="UniProtKB-UniRule"/>
</dbReference>
<dbReference type="GO" id="GO:0006302">
    <property type="term" value="P:double-strand break repair"/>
    <property type="evidence" value="ECO:0007669"/>
    <property type="project" value="TreeGrafter"/>
</dbReference>
<dbReference type="Gene3D" id="2.40.50.140">
    <property type="entry name" value="Nucleic acid-binding proteins"/>
    <property type="match status" value="1"/>
</dbReference>
<dbReference type="Gene3D" id="1.20.1440.120">
    <property type="entry name" value="Recombination protein O, C-terminal domain"/>
    <property type="match status" value="1"/>
</dbReference>
<dbReference type="HAMAP" id="MF_00201">
    <property type="entry name" value="RecO"/>
    <property type="match status" value="1"/>
</dbReference>
<dbReference type="InterPro" id="IPR037278">
    <property type="entry name" value="ARFGAP/RecO"/>
</dbReference>
<dbReference type="InterPro" id="IPR022572">
    <property type="entry name" value="DNA_rep/recomb_RecO_N"/>
</dbReference>
<dbReference type="InterPro" id="IPR012340">
    <property type="entry name" value="NA-bd_OB-fold"/>
</dbReference>
<dbReference type="InterPro" id="IPR003717">
    <property type="entry name" value="RecO"/>
</dbReference>
<dbReference type="InterPro" id="IPR042242">
    <property type="entry name" value="RecO_C"/>
</dbReference>
<dbReference type="NCBIfam" id="TIGR00613">
    <property type="entry name" value="reco"/>
    <property type="match status" value="1"/>
</dbReference>
<dbReference type="PANTHER" id="PTHR33991">
    <property type="entry name" value="DNA REPAIR PROTEIN RECO"/>
    <property type="match status" value="1"/>
</dbReference>
<dbReference type="PANTHER" id="PTHR33991:SF1">
    <property type="entry name" value="DNA REPAIR PROTEIN RECO"/>
    <property type="match status" value="1"/>
</dbReference>
<dbReference type="Pfam" id="PF02565">
    <property type="entry name" value="RecO_C"/>
    <property type="match status" value="1"/>
</dbReference>
<dbReference type="Pfam" id="PF11967">
    <property type="entry name" value="RecO_N"/>
    <property type="match status" value="1"/>
</dbReference>
<dbReference type="SUPFAM" id="SSF57863">
    <property type="entry name" value="ArfGap/RecO-like zinc finger"/>
    <property type="match status" value="1"/>
</dbReference>
<dbReference type="SUPFAM" id="SSF50249">
    <property type="entry name" value="Nucleic acid-binding proteins"/>
    <property type="match status" value="1"/>
</dbReference>
<proteinExistence type="inferred from homology"/>
<gene>
    <name evidence="1" type="primary">recO</name>
    <name type="ordered locus">MGAS10750_Spy0019</name>
</gene>
<organism>
    <name type="scientific">Streptococcus pyogenes serotype M4 (strain MGAS10750)</name>
    <dbReference type="NCBI Taxonomy" id="370554"/>
    <lineage>
        <taxon>Bacteria</taxon>
        <taxon>Bacillati</taxon>
        <taxon>Bacillota</taxon>
        <taxon>Bacilli</taxon>
        <taxon>Lactobacillales</taxon>
        <taxon>Streptococcaceae</taxon>
        <taxon>Streptococcus</taxon>
    </lineage>
</organism>
<reference key="1">
    <citation type="journal article" date="2006" name="Proc. Natl. Acad. Sci. U.S.A.">
        <title>Molecular genetic anatomy of inter- and intraserotype variation in the human bacterial pathogen group A Streptococcus.</title>
        <authorList>
            <person name="Beres S.B."/>
            <person name="Richter E.W."/>
            <person name="Nagiec M.J."/>
            <person name="Sumby P."/>
            <person name="Porcella S.F."/>
            <person name="DeLeo F.R."/>
            <person name="Musser J.M."/>
        </authorList>
    </citation>
    <scope>NUCLEOTIDE SEQUENCE [LARGE SCALE GENOMIC DNA]</scope>
    <source>
        <strain>MGAS10750</strain>
    </source>
</reference>
<sequence length="251" mass="29517">MQLTESLGIVLFNRNYREDDKLVKIFTEVAGKQMFFVKHISRSKMSSIIQPLTIADFIFKLNDTGLSYVVDYSNVNTYRYINNDIFRLAYASYVLALADAAIADNESDSHLFTFLKKTLDLMEEGLDYEILTNIFEIQILDRFGISLNFHECAICHRTDLPLDFSHRFSAVLCSEHYYKDNRRNHLDPNVIYLLSRFQKITFDDLRTISLNKDIKKKLRQFIDELYHDYVGIKLKSKTFIDNLVKWGDIMK</sequence>
<comment type="function">
    <text evidence="1">Involved in DNA repair and RecF pathway recombination.</text>
</comment>
<comment type="similarity">
    <text evidence="1">Belongs to the RecO family.</text>
</comment>
<protein>
    <recommendedName>
        <fullName evidence="1">DNA repair protein RecO</fullName>
    </recommendedName>
    <alternativeName>
        <fullName evidence="1">Recombination protein O</fullName>
    </alternativeName>
</protein>
<evidence type="ECO:0000255" key="1">
    <source>
        <dbReference type="HAMAP-Rule" id="MF_00201"/>
    </source>
</evidence>
<accession>Q1J942</accession>
<name>RECO_STRPF</name>